<feature type="chain" id="PRO_0000208731" description="GTP-binding nuclear protein GSP1/Ran">
    <location>
        <begin position="1"/>
        <end position="215"/>
    </location>
</feature>
<feature type="domain" description="Small GTPase Ran-type" evidence="3">
    <location>
        <begin position="4"/>
        <end position="168"/>
    </location>
</feature>
<feature type="region of interest" description="Switch-I" evidence="3">
    <location>
        <begin position="34"/>
        <end position="42"/>
    </location>
</feature>
<feature type="region of interest" description="Switch-II" evidence="3">
    <location>
        <begin position="65"/>
        <end position="81"/>
    </location>
</feature>
<feature type="binding site" evidence="2">
    <location>
        <begin position="15"/>
        <end position="22"/>
    </location>
    <ligand>
        <name>GTP</name>
        <dbReference type="ChEBI" id="CHEBI:37565"/>
    </ligand>
</feature>
<feature type="binding site" evidence="2">
    <location>
        <position position="65"/>
    </location>
    <ligand>
        <name>GTP</name>
        <dbReference type="ChEBI" id="CHEBI:37565"/>
    </ligand>
</feature>
<feature type="binding site" evidence="2">
    <location>
        <begin position="119"/>
        <end position="122"/>
    </location>
    <ligand>
        <name>GTP</name>
        <dbReference type="ChEBI" id="CHEBI:37565"/>
    </ligand>
</feature>
<feature type="binding site" evidence="2">
    <location>
        <begin position="147"/>
        <end position="149"/>
    </location>
    <ligand>
        <name>GTP</name>
        <dbReference type="ChEBI" id="CHEBI:37565"/>
    </ligand>
</feature>
<reference key="1">
    <citation type="journal article" date="2003" name="Nature">
        <title>The genome sequence of the filamentous fungus Neurospora crassa.</title>
        <authorList>
            <person name="Galagan J.E."/>
            <person name="Calvo S.E."/>
            <person name="Borkovich K.A."/>
            <person name="Selker E.U."/>
            <person name="Read N.D."/>
            <person name="Jaffe D.B."/>
            <person name="FitzHugh W."/>
            <person name="Ma L.-J."/>
            <person name="Smirnov S."/>
            <person name="Purcell S."/>
            <person name="Rehman B."/>
            <person name="Elkins T."/>
            <person name="Engels R."/>
            <person name="Wang S."/>
            <person name="Nielsen C.B."/>
            <person name="Butler J."/>
            <person name="Endrizzi M."/>
            <person name="Qui D."/>
            <person name="Ianakiev P."/>
            <person name="Bell-Pedersen D."/>
            <person name="Nelson M.A."/>
            <person name="Werner-Washburne M."/>
            <person name="Selitrennikoff C.P."/>
            <person name="Kinsey J.A."/>
            <person name="Braun E.L."/>
            <person name="Zelter A."/>
            <person name="Schulte U."/>
            <person name="Kothe G.O."/>
            <person name="Jedd G."/>
            <person name="Mewes H.-W."/>
            <person name="Staben C."/>
            <person name="Marcotte E."/>
            <person name="Greenberg D."/>
            <person name="Roy A."/>
            <person name="Foley K."/>
            <person name="Naylor J."/>
            <person name="Stange-Thomann N."/>
            <person name="Barrett R."/>
            <person name="Gnerre S."/>
            <person name="Kamal M."/>
            <person name="Kamvysselis M."/>
            <person name="Mauceli E.W."/>
            <person name="Bielke C."/>
            <person name="Rudd S."/>
            <person name="Frishman D."/>
            <person name="Krystofova S."/>
            <person name="Rasmussen C."/>
            <person name="Metzenberg R.L."/>
            <person name="Perkins D.D."/>
            <person name="Kroken S."/>
            <person name="Cogoni C."/>
            <person name="Macino G."/>
            <person name="Catcheside D.E.A."/>
            <person name="Li W."/>
            <person name="Pratt R.J."/>
            <person name="Osmani S.A."/>
            <person name="DeSouza C.P.C."/>
            <person name="Glass N.L."/>
            <person name="Orbach M.J."/>
            <person name="Berglund J.A."/>
            <person name="Voelker R."/>
            <person name="Yarden O."/>
            <person name="Plamann M."/>
            <person name="Seiler S."/>
            <person name="Dunlap J.C."/>
            <person name="Radford A."/>
            <person name="Aramayo R."/>
            <person name="Natvig D.O."/>
            <person name="Alex L.A."/>
            <person name="Mannhaupt G."/>
            <person name="Ebbole D.J."/>
            <person name="Freitag M."/>
            <person name="Paulsen I."/>
            <person name="Sachs M.S."/>
            <person name="Lander E.S."/>
            <person name="Nusbaum C."/>
            <person name="Birren B.W."/>
        </authorList>
    </citation>
    <scope>NUCLEOTIDE SEQUENCE [LARGE SCALE GENOMIC DNA]</scope>
    <source>
        <strain>ATCC 24698 / 74-OR23-1A / CBS 708.71 / DSM 1257 / FGSC 987</strain>
    </source>
</reference>
<reference key="2">
    <citation type="submission" date="1997-07" db="EMBL/GenBank/DDBJ databases">
        <title>Identification of a ran-gene homologue in N.crassa by RT-PCR.</title>
        <authorList>
            <person name="Meyer M.M."/>
            <person name="Techel D."/>
            <person name="Rensing L."/>
        </authorList>
    </citation>
    <scope>NUCLEOTIDE SEQUENCE [MRNA] OF 46-148</scope>
    <source>
        <strain>FGSC 1858 / bd-A</strain>
    </source>
</reference>
<protein>
    <recommendedName>
        <fullName>GTP-binding nuclear protein GSP1/Ran</fullName>
    </recommendedName>
</protein>
<comment type="function">
    <text evidence="1">GTP-binding protein involved in nucleocytoplasmic transport. Required for the import of protein into the nucleus and also for RNA export. Involved in chromatin condensation and control of cell cycle (By similarity).</text>
</comment>
<comment type="subunit">
    <text evidence="2">Found in a nuclear export complex with RanGTP, exportin and pre-miRNA (By similarity).</text>
</comment>
<comment type="subcellular location">
    <subcellularLocation>
        <location evidence="1">Nucleus</location>
    </subcellularLocation>
</comment>
<comment type="similarity">
    <text evidence="3 4">Belongs to the small GTPase superfamily. Ran family.</text>
</comment>
<keyword id="KW-0342">GTP-binding</keyword>
<keyword id="KW-0547">Nucleotide-binding</keyword>
<keyword id="KW-0539">Nucleus</keyword>
<keyword id="KW-0653">Protein transport</keyword>
<keyword id="KW-1185">Reference proteome</keyword>
<keyword id="KW-0813">Transport</keyword>
<accession>Q7RVL0</accession>
<accession>A7UXB8</accession>
<accession>O13494</accession>
<accession>V5IRS7</accession>
<sequence>MAAATPTFKLVLVGDGGTGKTTFVKRHLTGEFEKKYMATLGVEVHPLGFSTNFGQIQFDVWDTAGQEKFGGLRDGYYINGQCGIIMFDVTSRITYKNVPNWHRDLTRVCENIPIVLCGNKVDVKERKVKAKTITFHRKKNLQYYDISAKSNYNFEKPFLWLARKLVGNNALEFVAAPALAPPTAVVDQELMEKYRAEMDEAAQMPLPNEEDDDDL</sequence>
<gene>
    <name type="primary">ran</name>
    <name type="synonym">gsp1</name>
    <name type="ORF">NCU09269</name>
</gene>
<evidence type="ECO:0000250" key="1"/>
<evidence type="ECO:0000250" key="2">
    <source>
        <dbReference type="UniProtKB" id="P62825"/>
    </source>
</evidence>
<evidence type="ECO:0000255" key="3">
    <source>
        <dbReference type="PROSITE-ProRule" id="PRU00752"/>
    </source>
</evidence>
<evidence type="ECO:0000305" key="4"/>
<name>GSP1_NEUCR</name>
<organism>
    <name type="scientific">Neurospora crassa (strain ATCC 24698 / 74-OR23-1A / CBS 708.71 / DSM 1257 / FGSC 987)</name>
    <dbReference type="NCBI Taxonomy" id="367110"/>
    <lineage>
        <taxon>Eukaryota</taxon>
        <taxon>Fungi</taxon>
        <taxon>Dikarya</taxon>
        <taxon>Ascomycota</taxon>
        <taxon>Pezizomycotina</taxon>
        <taxon>Sordariomycetes</taxon>
        <taxon>Sordariomycetidae</taxon>
        <taxon>Sordariales</taxon>
        <taxon>Sordariaceae</taxon>
        <taxon>Neurospora</taxon>
    </lineage>
</organism>
<proteinExistence type="evidence at transcript level"/>
<dbReference type="EMBL" id="CM002236">
    <property type="protein sequence ID" value="ESA44396.1"/>
    <property type="molecule type" value="Genomic_DNA"/>
</dbReference>
<dbReference type="EMBL" id="CM002236">
    <property type="protein sequence ID" value="ESA44397.1"/>
    <property type="molecule type" value="Genomic_DNA"/>
</dbReference>
<dbReference type="EMBL" id="AJ000287">
    <property type="protein sequence ID" value="CAA03987.1"/>
    <property type="molecule type" value="mRNA"/>
</dbReference>
<dbReference type="RefSeq" id="XP_011393266.1">
    <property type="nucleotide sequence ID" value="XM_011394964.1"/>
</dbReference>
<dbReference type="RefSeq" id="XP_011393267.1">
    <property type="nucleotide sequence ID" value="XM_011394965.1"/>
</dbReference>
<dbReference type="SMR" id="Q7RVL0"/>
<dbReference type="FunCoup" id="Q7RVL0">
    <property type="interactions" value="1413"/>
</dbReference>
<dbReference type="STRING" id="367110.Q7RVL0"/>
<dbReference type="PaxDb" id="5141-EFNCRP00000009070"/>
<dbReference type="EnsemblFungi" id="ESA44396">
    <property type="protein sequence ID" value="ESA44396"/>
    <property type="gene ID" value="NCU09269"/>
</dbReference>
<dbReference type="EnsemblFungi" id="ESA44397">
    <property type="protein sequence ID" value="ESA44397"/>
    <property type="gene ID" value="NCU09269"/>
</dbReference>
<dbReference type="GeneID" id="3880853"/>
<dbReference type="KEGG" id="ncr:NCU09269"/>
<dbReference type="VEuPathDB" id="FungiDB:NCU09269"/>
<dbReference type="HOGENOM" id="CLU_041217_13_0_1"/>
<dbReference type="InParanoid" id="Q7RVL0"/>
<dbReference type="OMA" id="FNAWDTA"/>
<dbReference type="OrthoDB" id="48625at2759"/>
<dbReference type="Proteomes" id="UP000001805">
    <property type="component" value="Chromosome 1, Linkage Group I"/>
</dbReference>
<dbReference type="GO" id="GO:0005737">
    <property type="term" value="C:cytoplasm"/>
    <property type="evidence" value="ECO:0000318"/>
    <property type="project" value="GO_Central"/>
</dbReference>
<dbReference type="GO" id="GO:0005634">
    <property type="term" value="C:nucleus"/>
    <property type="evidence" value="ECO:0000318"/>
    <property type="project" value="GO_Central"/>
</dbReference>
<dbReference type="GO" id="GO:0005525">
    <property type="term" value="F:GTP binding"/>
    <property type="evidence" value="ECO:0007669"/>
    <property type="project" value="UniProtKB-KW"/>
</dbReference>
<dbReference type="GO" id="GO:0003924">
    <property type="term" value="F:GTPase activity"/>
    <property type="evidence" value="ECO:0000318"/>
    <property type="project" value="GO_Central"/>
</dbReference>
<dbReference type="GO" id="GO:0006606">
    <property type="term" value="P:protein import into nucleus"/>
    <property type="evidence" value="ECO:0000318"/>
    <property type="project" value="GO_Central"/>
</dbReference>
<dbReference type="GO" id="GO:0000054">
    <property type="term" value="P:ribosomal subunit export from nucleus"/>
    <property type="evidence" value="ECO:0000318"/>
    <property type="project" value="GO_Central"/>
</dbReference>
<dbReference type="CDD" id="cd00877">
    <property type="entry name" value="Ran"/>
    <property type="match status" value="1"/>
</dbReference>
<dbReference type="FunFam" id="3.40.50.300:FF:000131">
    <property type="entry name" value="GTP-binding nuclear protein Ran"/>
    <property type="match status" value="1"/>
</dbReference>
<dbReference type="Gene3D" id="3.40.50.300">
    <property type="entry name" value="P-loop containing nucleotide triphosphate hydrolases"/>
    <property type="match status" value="1"/>
</dbReference>
<dbReference type="InterPro" id="IPR027417">
    <property type="entry name" value="P-loop_NTPase"/>
</dbReference>
<dbReference type="InterPro" id="IPR002041">
    <property type="entry name" value="Ran_GTPase"/>
</dbReference>
<dbReference type="InterPro" id="IPR005225">
    <property type="entry name" value="Small_GTP-bd"/>
</dbReference>
<dbReference type="InterPro" id="IPR001806">
    <property type="entry name" value="Small_GTPase"/>
</dbReference>
<dbReference type="NCBIfam" id="TIGR00231">
    <property type="entry name" value="small_GTP"/>
    <property type="match status" value="1"/>
</dbReference>
<dbReference type="PANTHER" id="PTHR24071:SF0">
    <property type="entry name" value="GTP-BINDING NUCLEAR PROTEIN RAN"/>
    <property type="match status" value="1"/>
</dbReference>
<dbReference type="PANTHER" id="PTHR24071">
    <property type="entry name" value="RAN GTPASE"/>
    <property type="match status" value="1"/>
</dbReference>
<dbReference type="Pfam" id="PF00071">
    <property type="entry name" value="Ras"/>
    <property type="match status" value="1"/>
</dbReference>
<dbReference type="PRINTS" id="PR00627">
    <property type="entry name" value="GTPRANTC4"/>
</dbReference>
<dbReference type="SMART" id="SM00175">
    <property type="entry name" value="RAB"/>
    <property type="match status" value="1"/>
</dbReference>
<dbReference type="SMART" id="SM00176">
    <property type="entry name" value="RAN"/>
    <property type="match status" value="1"/>
</dbReference>
<dbReference type="SMART" id="SM00173">
    <property type="entry name" value="RAS"/>
    <property type="match status" value="1"/>
</dbReference>
<dbReference type="SMART" id="SM00174">
    <property type="entry name" value="RHO"/>
    <property type="match status" value="1"/>
</dbReference>
<dbReference type="SUPFAM" id="SSF52540">
    <property type="entry name" value="P-loop containing nucleoside triphosphate hydrolases"/>
    <property type="match status" value="1"/>
</dbReference>
<dbReference type="PROSITE" id="PS51418">
    <property type="entry name" value="RAN"/>
    <property type="match status" value="1"/>
</dbReference>